<dbReference type="EMBL" id="U28375">
    <property type="protein sequence ID" value="AAA83032.1"/>
    <property type="molecule type" value="Genomic_DNA"/>
</dbReference>
<dbReference type="EMBL" id="U00096">
    <property type="status" value="NOT_ANNOTATED_CDS"/>
    <property type="molecule type" value="Genomic_DNA"/>
</dbReference>
<dbReference type="EMBL" id="AP009048">
    <property type="protein sequence ID" value="BAE76919.1"/>
    <property type="molecule type" value="Genomic_DNA"/>
</dbReference>
<dbReference type="PIR" id="C65068">
    <property type="entry name" value="C65068"/>
</dbReference>
<dbReference type="SMR" id="Q46786"/>
<dbReference type="BioGRID" id="4262052">
    <property type="interactions" value="10"/>
</dbReference>
<dbReference type="FunCoup" id="Q46786">
    <property type="interactions" value="22"/>
</dbReference>
<dbReference type="KEGG" id="ecj:JW2818"/>
<dbReference type="PATRIC" id="fig|1411691.4.peg.3882"/>
<dbReference type="EchoBASE" id="EB2851"/>
<dbReference type="HOGENOM" id="CLU_137853_0_0_6"/>
<dbReference type="InParanoid" id="Q46786"/>
<dbReference type="OMA" id="KYLTHGL"/>
<dbReference type="Proteomes" id="UP000000625">
    <property type="component" value="Chromosome"/>
</dbReference>
<feature type="chain" id="PRO_0000169339" description="Putative uncharacterized protein YgeF">
    <location>
        <begin position="1"/>
        <end position="148"/>
    </location>
</feature>
<feature type="region of interest" description="Disordered" evidence="1">
    <location>
        <begin position="1"/>
        <end position="31"/>
    </location>
</feature>
<feature type="compositionally biased region" description="Polar residues" evidence="1">
    <location>
        <begin position="1"/>
        <end position="11"/>
    </location>
</feature>
<feature type="compositionally biased region" description="Basic and acidic residues" evidence="1">
    <location>
        <begin position="19"/>
        <end position="30"/>
    </location>
</feature>
<sequence length="148" mass="16878">MKPRNINNSLPLQPLVPDQENKNKKNEEKSVNPVKITMGSGLNYIEQESLGGKYLTHDLSIKIADISEEIIQQAILSAMSIYKFSITDDLMSMAVNELIKLTKIENNVDLNKFTTICTDVLSPRVTRHNKEKNKRHSTLLKNPLFNFH</sequence>
<name>YGEF_ECOLI</name>
<keyword id="KW-1185">Reference proteome</keyword>
<gene>
    <name type="primary">ygeF</name>
    <name type="ordered locus">b2850</name>
    <name type="ordered locus">JW2818</name>
</gene>
<evidence type="ECO:0000256" key="1">
    <source>
        <dbReference type="SAM" id="MobiDB-lite"/>
    </source>
</evidence>
<evidence type="ECO:0000305" key="2"/>
<protein>
    <recommendedName>
        <fullName>Putative uncharacterized protein YgeF</fullName>
    </recommendedName>
</protein>
<organism>
    <name type="scientific">Escherichia coli (strain K12)</name>
    <dbReference type="NCBI Taxonomy" id="83333"/>
    <lineage>
        <taxon>Bacteria</taxon>
        <taxon>Pseudomonadati</taxon>
        <taxon>Pseudomonadota</taxon>
        <taxon>Gammaproteobacteria</taxon>
        <taxon>Enterobacterales</taxon>
        <taxon>Enterobacteriaceae</taxon>
        <taxon>Escherichia</taxon>
    </lineage>
</organism>
<reference key="1">
    <citation type="journal article" date="1997" name="Science">
        <title>The complete genome sequence of Escherichia coli K-12.</title>
        <authorList>
            <person name="Blattner F.R."/>
            <person name="Plunkett G. III"/>
            <person name="Bloch C.A."/>
            <person name="Perna N.T."/>
            <person name="Burland V."/>
            <person name="Riley M."/>
            <person name="Collado-Vides J."/>
            <person name="Glasner J.D."/>
            <person name="Rode C.K."/>
            <person name="Mayhew G.F."/>
            <person name="Gregor J."/>
            <person name="Davis N.W."/>
            <person name="Kirkpatrick H.A."/>
            <person name="Goeden M.A."/>
            <person name="Rose D.J."/>
            <person name="Mau B."/>
            <person name="Shao Y."/>
        </authorList>
    </citation>
    <scope>NUCLEOTIDE SEQUENCE [LARGE SCALE GENOMIC DNA]</scope>
    <source>
        <strain>K12 / MG1655 / ATCC 47076</strain>
    </source>
</reference>
<reference key="2">
    <citation type="journal article" date="2006" name="Mol. Syst. Biol.">
        <title>Highly accurate genome sequences of Escherichia coli K-12 strains MG1655 and W3110.</title>
        <authorList>
            <person name="Hayashi K."/>
            <person name="Morooka N."/>
            <person name="Yamamoto Y."/>
            <person name="Fujita K."/>
            <person name="Isono K."/>
            <person name="Choi S."/>
            <person name="Ohtsubo E."/>
            <person name="Baba T."/>
            <person name="Wanner B.L."/>
            <person name="Mori H."/>
            <person name="Horiuchi T."/>
        </authorList>
    </citation>
    <scope>NUCLEOTIDE SEQUENCE [LARGE SCALE GENOMIC DNA]</scope>
    <source>
        <strain>K12 / W3110 / ATCC 27325 / DSM 5911</strain>
    </source>
</reference>
<accession>Q46786</accession>
<accession>Q2M9Y7</accession>
<proteinExistence type="uncertain"/>
<comment type="caution">
    <text evidence="2">Could be the product of a pseudogene.</text>
</comment>